<gene>
    <name type="primary">alkbh8</name>
    <name type="ORF">TEgg091o15.1</name>
</gene>
<proteinExistence type="evidence at transcript level"/>
<feature type="chain" id="PRO_0000337128" description="tRNA (carboxymethyluridine(34)-5-O)-methyltransferase alkbh8">
    <location>
        <begin position="1"/>
        <end position="628"/>
    </location>
</feature>
<feature type="domain" description="RRM" evidence="3">
    <location>
        <begin position="43"/>
        <end position="123"/>
    </location>
</feature>
<feature type="domain" description="Fe2OG dioxygenase" evidence="4">
    <location>
        <begin position="218"/>
        <end position="335"/>
    </location>
</feature>
<feature type="region of interest" description="Methyltransferase domain" evidence="1">
    <location>
        <begin position="410"/>
        <end position="628"/>
    </location>
</feature>
<feature type="region of interest" description="Disordered" evidence="5">
    <location>
        <begin position="563"/>
        <end position="582"/>
    </location>
</feature>
<feature type="compositionally biased region" description="Basic and acidic residues" evidence="5">
    <location>
        <begin position="569"/>
        <end position="582"/>
    </location>
</feature>
<feature type="binding site" evidence="2">
    <location>
        <begin position="225"/>
        <end position="227"/>
    </location>
    <ligand>
        <name>2-oxoglutarate</name>
        <dbReference type="ChEBI" id="CHEBI:16810"/>
    </ligand>
</feature>
<feature type="binding site" evidence="4">
    <location>
        <position position="236"/>
    </location>
    <ligand>
        <name>Fe cation</name>
        <dbReference type="ChEBI" id="CHEBI:24875"/>
        <note>catalytic</note>
    </ligand>
</feature>
<feature type="binding site" evidence="4">
    <location>
        <position position="238"/>
    </location>
    <ligand>
        <name>Fe cation</name>
        <dbReference type="ChEBI" id="CHEBI:24875"/>
        <note>catalytic</note>
    </ligand>
</feature>
<feature type="binding site" evidence="2">
    <location>
        <position position="240"/>
    </location>
    <ligand>
        <name>Zn(2+)</name>
        <dbReference type="ChEBI" id="CHEBI:29105"/>
    </ligand>
</feature>
<feature type="binding site" evidence="4">
    <location>
        <position position="290"/>
    </location>
    <ligand>
        <name>Fe cation</name>
        <dbReference type="ChEBI" id="CHEBI:24875"/>
        <note>catalytic</note>
    </ligand>
</feature>
<feature type="binding site" evidence="2">
    <location>
        <position position="326"/>
    </location>
    <ligand>
        <name>2-oxoglutarate</name>
        <dbReference type="ChEBI" id="CHEBI:16810"/>
    </ligand>
</feature>
<feature type="binding site" evidence="2">
    <location>
        <position position="332"/>
    </location>
    <ligand>
        <name>2-oxoglutarate</name>
        <dbReference type="ChEBI" id="CHEBI:16810"/>
    </ligand>
</feature>
<feature type="binding site" evidence="2">
    <location>
        <position position="339"/>
    </location>
    <ligand>
        <name>Zn(2+)</name>
        <dbReference type="ChEBI" id="CHEBI:29105"/>
    </ligand>
</feature>
<feature type="binding site" evidence="2">
    <location>
        <position position="341"/>
    </location>
    <ligand>
        <name>Zn(2+)</name>
        <dbReference type="ChEBI" id="CHEBI:29105"/>
    </ligand>
</feature>
<feature type="binding site" evidence="2">
    <location>
        <position position="347"/>
    </location>
    <ligand>
        <name>Zn(2+)</name>
        <dbReference type="ChEBI" id="CHEBI:29105"/>
    </ligand>
</feature>
<sequence length="628" mass="70022">MGSIDGTRPKLSKDNKKLLKKQAKAKHILLKHEGIETVLHLSQSLVVANGGLGNGVSRQQLLAVLERCGKVETLLMPPNKPYAFVTYSSAEEAIKAYSSLSGQELCGEDAEQPITLYLSFVEKVVVKEVLSPSLPPGLIIVEDFVSPEQERTMLESIDWDSETSSQKSLKHRQVKHYGYEFRYDNNNVDKDKPLPGGLPDFCTEALRKCVQRGLIKHDPDQLTINQYEPGQGIPPHVDTHSAFEDEILSLSLGAEIVMDFKHPNGSVVPVMLPQRSLLIMSGESRYLWTHGITPRKFDVIQVSEGQTVGTISGNSGELTLSKRSTRTSFTFRKVRHSPCDCAFPSECDSQQTQKEKSPPTVGELGASTLEREYVHKVYDDIAGHFSSTRHTPWPKIGDFLASLPKGSLVADVGCGNGKYLGVNKDLCMIGCDRSKNLVDICRERTFEAFVCDALSVPFRAGAFDACISIAVIHHFATEERRIAALQELIRLLRKGGKALIYVWALEQEYKKNKSKYLKESKTSQGPSSDALGTNLAVKAPLPIHTNRTSFHSQDLLVPWHLKPTNKSKVTPENKEQNEKEHGPDSVYHRFYHVFCEGELEAMCNRLSNVAVQHSYHDQGNWCVILEKL</sequence>
<name>ALKB8_XENTR</name>
<reference key="1">
    <citation type="submission" date="2006-10" db="EMBL/GenBank/DDBJ databases">
        <authorList>
            <consortium name="Sanger Xenopus tropicalis EST/cDNA project"/>
        </authorList>
    </citation>
    <scope>NUCLEOTIDE SEQUENCE [LARGE SCALE MRNA]</scope>
    <source>
        <tissue>Egg</tissue>
    </source>
</reference>
<protein>
    <recommendedName>
        <fullName>tRNA (carboxymethyluridine(34)-5-O)-methyltransferase alkbh8</fullName>
        <ecNumber evidence="2">2.1.1.229</ecNumber>
    </recommendedName>
    <alternativeName>
        <fullName>Alkylated DNA repair protein alkB homolog 8</fullName>
    </alternativeName>
    <alternativeName>
        <fullName>Probable alpha-ketoglutarate-dependent dioxygenase ALKBH8</fullName>
    </alternativeName>
    <alternativeName>
        <fullName>S-adenosyl-L-methionine-dependent tRNA methyltransferase ALKBH8</fullName>
    </alternativeName>
</protein>
<comment type="function">
    <text evidence="2">Catalyzes the methylation of 5-carboxymethyl uridine to 5-methylcarboxymethyl uridine at the wobble position of the anticodon loop in tRNA via its methyltransferase domain. Catalyzes the last step in the formation of 5-methylcarboxymethyl uridine at the wobble position of the anticodon loop in target tRNA. Has a preference for tRNA(Arg) and tRNA(Glu), and does not bind tRNA(Lys). Binds tRNA and catalyzes the iron and alpha-ketoglutarate dependent hydroxylation of 5-methylcarboxymethyl uridine at the wobble position of the anticodon loop in tRNA via its dioxygenase domain, giving rise to 5-(S)-methoxycarbonylhydroxymethyluridine; has a preference for tRNA(Gly). Required for normal survival after DNA damage. May inhibit apoptosis and promote cell survival and angiogenesis (By similarity).</text>
</comment>
<comment type="catalytic activity">
    <reaction>
        <text>5-(carboxymethyl)uridine(34) in tRNA + S-adenosyl-L-methionine = 5-(2-methoxy-2-oxoethyl)uridine(34) in tRNA + S-adenosyl-L-homocysteine</text>
        <dbReference type="Rhea" id="RHEA:43208"/>
        <dbReference type="Rhea" id="RHEA-COMP:10407"/>
        <dbReference type="Rhea" id="RHEA-COMP:10408"/>
        <dbReference type="ChEBI" id="CHEBI:57856"/>
        <dbReference type="ChEBI" id="CHEBI:59789"/>
        <dbReference type="ChEBI" id="CHEBI:74851"/>
        <dbReference type="ChEBI" id="CHEBI:74882"/>
        <dbReference type="EC" id="2.1.1.229"/>
    </reaction>
</comment>
<comment type="cofactor">
    <cofactor evidence="2">
        <name>Fe(2+)</name>
        <dbReference type="ChEBI" id="CHEBI:29033"/>
    </cofactor>
    <text evidence="2">Binds 1 Fe(2+) ion per subunit.</text>
</comment>
<comment type="subcellular location">
    <subcellularLocation>
        <location evidence="2">Cytoplasm</location>
    </subcellularLocation>
    <subcellularLocation>
        <location evidence="2">Nucleus</location>
    </subcellularLocation>
    <text evidence="2">Predominantly cytoplasmic.</text>
</comment>
<comment type="similarity">
    <text evidence="6">Belongs to the alkB family.</text>
</comment>
<comment type="sequence caution" evidence="6">
    <conflict type="erroneous initiation">
        <sequence resource="EMBL-CDS" id="CAL49308"/>
    </conflict>
    <text>Extended N-terminus.</text>
</comment>
<organism>
    <name type="scientific">Xenopus tropicalis</name>
    <name type="common">Western clawed frog</name>
    <name type="synonym">Silurana tropicalis</name>
    <dbReference type="NCBI Taxonomy" id="8364"/>
    <lineage>
        <taxon>Eukaryota</taxon>
        <taxon>Metazoa</taxon>
        <taxon>Chordata</taxon>
        <taxon>Craniata</taxon>
        <taxon>Vertebrata</taxon>
        <taxon>Euteleostomi</taxon>
        <taxon>Amphibia</taxon>
        <taxon>Batrachia</taxon>
        <taxon>Anura</taxon>
        <taxon>Pipoidea</taxon>
        <taxon>Pipidae</taxon>
        <taxon>Xenopodinae</taxon>
        <taxon>Xenopus</taxon>
        <taxon>Silurana</taxon>
    </lineage>
</organism>
<dbReference type="EC" id="2.1.1.229" evidence="2"/>
<dbReference type="EMBL" id="CR855607">
    <property type="protein sequence ID" value="CAL49308.1"/>
    <property type="status" value="ALT_INIT"/>
    <property type="molecule type" value="mRNA"/>
</dbReference>
<dbReference type="RefSeq" id="NP_001017297.2">
    <property type="nucleotide sequence ID" value="NM_001017297.3"/>
</dbReference>
<dbReference type="SMR" id="Q07G10"/>
<dbReference type="FunCoup" id="Q07G10">
    <property type="interactions" value="3181"/>
</dbReference>
<dbReference type="STRING" id="8364.ENSXETP00000041963"/>
<dbReference type="PaxDb" id="8364-ENSXETP00000031643"/>
<dbReference type="GeneID" id="550051"/>
<dbReference type="KEGG" id="xtr:550051"/>
<dbReference type="CTD" id="91801"/>
<dbReference type="eggNOG" id="KOG1331">
    <property type="taxonomic scope" value="Eukaryota"/>
</dbReference>
<dbReference type="eggNOG" id="KOG4176">
    <property type="taxonomic scope" value="Eukaryota"/>
</dbReference>
<dbReference type="InParanoid" id="Q07G10"/>
<dbReference type="OrthoDB" id="271595at2759"/>
<dbReference type="Proteomes" id="UP000008143">
    <property type="component" value="Chromosome 2"/>
</dbReference>
<dbReference type="GO" id="GO:0005829">
    <property type="term" value="C:cytosol"/>
    <property type="evidence" value="ECO:0000250"/>
    <property type="project" value="UniProtKB"/>
</dbReference>
<dbReference type="GO" id="GO:0005634">
    <property type="term" value="C:nucleus"/>
    <property type="evidence" value="ECO:0000250"/>
    <property type="project" value="UniProtKB"/>
</dbReference>
<dbReference type="GO" id="GO:0005506">
    <property type="term" value="F:iron ion binding"/>
    <property type="evidence" value="ECO:0000250"/>
    <property type="project" value="UniProtKB"/>
</dbReference>
<dbReference type="GO" id="GO:0008757">
    <property type="term" value="F:S-adenosylmethionine-dependent methyltransferase activity"/>
    <property type="evidence" value="ECO:0007669"/>
    <property type="project" value="InterPro"/>
</dbReference>
<dbReference type="GO" id="GO:0106335">
    <property type="term" value="F:tRNA (5-carboxymethyluridine(34)-5-O)-methyltransferase activity"/>
    <property type="evidence" value="ECO:0007669"/>
    <property type="project" value="UniProtKB-EC"/>
</dbReference>
<dbReference type="GO" id="GO:0016300">
    <property type="term" value="F:tRNA (uridine) methyltransferase activity"/>
    <property type="evidence" value="ECO:0000250"/>
    <property type="project" value="UniProtKB"/>
</dbReference>
<dbReference type="GO" id="GO:0000049">
    <property type="term" value="F:tRNA binding"/>
    <property type="evidence" value="ECO:0000250"/>
    <property type="project" value="UniProtKB"/>
</dbReference>
<dbReference type="GO" id="GO:0008270">
    <property type="term" value="F:zinc ion binding"/>
    <property type="evidence" value="ECO:0000250"/>
    <property type="project" value="UniProtKB"/>
</dbReference>
<dbReference type="GO" id="GO:0030488">
    <property type="term" value="P:tRNA methylation"/>
    <property type="evidence" value="ECO:0000250"/>
    <property type="project" value="UniProtKB"/>
</dbReference>
<dbReference type="GO" id="GO:0002098">
    <property type="term" value="P:tRNA wobble uridine modification"/>
    <property type="evidence" value="ECO:0000250"/>
    <property type="project" value="UniProtKB"/>
</dbReference>
<dbReference type="CDD" id="cd02440">
    <property type="entry name" value="AdoMet_MTases"/>
    <property type="match status" value="1"/>
</dbReference>
<dbReference type="CDD" id="cd12431">
    <property type="entry name" value="RRM_ALKBH8"/>
    <property type="match status" value="1"/>
</dbReference>
<dbReference type="FunFam" id="2.60.120.590:FF:000012">
    <property type="entry name" value="AlkB homolog 8, tRNA methyltransferase"/>
    <property type="match status" value="1"/>
</dbReference>
<dbReference type="FunFam" id="3.30.70.330:FF:000313">
    <property type="entry name" value="Alkylated DNA repair protein alkB homolog 8"/>
    <property type="match status" value="1"/>
</dbReference>
<dbReference type="Gene3D" id="3.30.70.330">
    <property type="match status" value="1"/>
</dbReference>
<dbReference type="Gene3D" id="2.60.120.590">
    <property type="entry name" value="Alpha-ketoglutarate-dependent dioxygenase AlkB-like"/>
    <property type="match status" value="1"/>
</dbReference>
<dbReference type="Gene3D" id="3.40.50.150">
    <property type="entry name" value="Vaccinia Virus protein VP39"/>
    <property type="match status" value="1"/>
</dbReference>
<dbReference type="InterPro" id="IPR027450">
    <property type="entry name" value="AlkB-like"/>
</dbReference>
<dbReference type="InterPro" id="IPR037151">
    <property type="entry name" value="AlkB-like_sf"/>
</dbReference>
<dbReference type="InterPro" id="IPR051422">
    <property type="entry name" value="AlkB_tRNA_MeTrf/Diox"/>
</dbReference>
<dbReference type="InterPro" id="IPR034256">
    <property type="entry name" value="ALKBH8_RRM"/>
</dbReference>
<dbReference type="InterPro" id="IPR013216">
    <property type="entry name" value="Methyltransf_11"/>
</dbReference>
<dbReference type="InterPro" id="IPR012677">
    <property type="entry name" value="Nucleotide-bd_a/b_plait_sf"/>
</dbReference>
<dbReference type="InterPro" id="IPR005123">
    <property type="entry name" value="Oxoglu/Fe-dep_dioxygenase_dom"/>
</dbReference>
<dbReference type="InterPro" id="IPR035979">
    <property type="entry name" value="RBD_domain_sf"/>
</dbReference>
<dbReference type="InterPro" id="IPR000504">
    <property type="entry name" value="RRM_dom"/>
</dbReference>
<dbReference type="InterPro" id="IPR029063">
    <property type="entry name" value="SAM-dependent_MTases_sf"/>
</dbReference>
<dbReference type="PANTHER" id="PTHR13069">
    <property type="entry name" value="ALKYLATED DNA REPAIR PROTEIN ALKB HOMOLOG 8"/>
    <property type="match status" value="1"/>
</dbReference>
<dbReference type="PANTHER" id="PTHR13069:SF21">
    <property type="entry name" value="ALKYLATED DNA REPAIR PROTEIN ALKB HOMOLOG 8"/>
    <property type="match status" value="1"/>
</dbReference>
<dbReference type="Pfam" id="PF13532">
    <property type="entry name" value="2OG-FeII_Oxy_2"/>
    <property type="match status" value="1"/>
</dbReference>
<dbReference type="Pfam" id="PF08241">
    <property type="entry name" value="Methyltransf_11"/>
    <property type="match status" value="1"/>
</dbReference>
<dbReference type="Pfam" id="PF00076">
    <property type="entry name" value="RRM_1"/>
    <property type="match status" value="1"/>
</dbReference>
<dbReference type="SMART" id="SM00360">
    <property type="entry name" value="RRM"/>
    <property type="match status" value="1"/>
</dbReference>
<dbReference type="SUPFAM" id="SSF51197">
    <property type="entry name" value="Clavaminate synthase-like"/>
    <property type="match status" value="1"/>
</dbReference>
<dbReference type="SUPFAM" id="SSF54928">
    <property type="entry name" value="RNA-binding domain, RBD"/>
    <property type="match status" value="1"/>
</dbReference>
<dbReference type="SUPFAM" id="SSF53335">
    <property type="entry name" value="S-adenosyl-L-methionine-dependent methyltransferases"/>
    <property type="match status" value="1"/>
</dbReference>
<dbReference type="PROSITE" id="PS51471">
    <property type="entry name" value="FE2OG_OXY"/>
    <property type="match status" value="1"/>
</dbReference>
<dbReference type="PROSITE" id="PS50102">
    <property type="entry name" value="RRM"/>
    <property type="match status" value="1"/>
</dbReference>
<accession>Q07G10</accession>
<evidence type="ECO:0000250" key="1"/>
<evidence type="ECO:0000250" key="2">
    <source>
        <dbReference type="UniProtKB" id="Q96BT7"/>
    </source>
</evidence>
<evidence type="ECO:0000255" key="3">
    <source>
        <dbReference type="PROSITE-ProRule" id="PRU00176"/>
    </source>
</evidence>
<evidence type="ECO:0000255" key="4">
    <source>
        <dbReference type="PROSITE-ProRule" id="PRU00805"/>
    </source>
</evidence>
<evidence type="ECO:0000256" key="5">
    <source>
        <dbReference type="SAM" id="MobiDB-lite"/>
    </source>
</evidence>
<evidence type="ECO:0000305" key="6"/>
<keyword id="KW-0963">Cytoplasm</keyword>
<keyword id="KW-0408">Iron</keyword>
<keyword id="KW-0479">Metal-binding</keyword>
<keyword id="KW-0489">Methyltransferase</keyword>
<keyword id="KW-0511">Multifunctional enzyme</keyword>
<keyword id="KW-0539">Nucleus</keyword>
<keyword id="KW-1185">Reference proteome</keyword>
<keyword id="KW-0694">RNA-binding</keyword>
<keyword id="KW-0949">S-adenosyl-L-methionine</keyword>
<keyword id="KW-0808">Transferase</keyword>
<keyword id="KW-0862">Zinc</keyword>